<organism>
    <name type="scientific">Measles virus (strain Edmonston)</name>
    <name type="common">MeV</name>
    <name type="synonym">Subacute sclerose panencephalitis virus</name>
    <dbReference type="NCBI Taxonomy" id="11235"/>
    <lineage>
        <taxon>Viruses</taxon>
        <taxon>Riboviria</taxon>
        <taxon>Orthornavirae</taxon>
        <taxon>Negarnaviricota</taxon>
        <taxon>Haploviricotina</taxon>
        <taxon>Monjiviricetes</taxon>
        <taxon>Mononegavirales</taxon>
        <taxon>Paramyxoviridae</taxon>
        <taxon>Orthoparamyxovirinae</taxon>
        <taxon>Morbillivirus</taxon>
        <taxon>Morbillivirus hominis</taxon>
        <taxon>Measles morbillivirus</taxon>
    </lineage>
</organism>
<proteinExistence type="evidence at protein level"/>
<gene>
    <name type="primary">L</name>
</gene>
<accession>P12576</accession>
<feature type="chain" id="PRO_0000142729" description="RNA-directed RNA polymerase L">
    <location>
        <begin position="1"/>
        <end position="2183"/>
    </location>
</feature>
<feature type="domain" description="RdRp catalytic" evidence="5">
    <location>
        <begin position="656"/>
        <end position="840"/>
    </location>
</feature>
<feature type="domain" description="Mononegavirus-type SAM-dependent 2'-O-MTase" evidence="6">
    <location>
        <begin position="1755"/>
        <end position="1958"/>
    </location>
</feature>
<feature type="binding site" evidence="4">
    <location>
        <begin position="1785"/>
        <end position="1794"/>
    </location>
    <ligand>
        <name>ATP</name>
        <dbReference type="ChEBI" id="CHEBI:30616"/>
    </ligand>
</feature>
<comment type="function">
    <text evidence="2">RNA-directed RNA polymerase that catalyzes the transcription of viral mRNAs, their capping and polyadenylation. The template is composed of the viral RNA tightly encapsidated by the nucleoprotein (N). The viral polymerase binds to the genomic RNA at the 3' leader promoter, and transcribes subsequently all viral mRNAs with a decreasing efficiency. The first gene is the most transcribed, and the last the least transcribed. The viral phosphoprotein acts as a processivity factor. Capping is concomitant with initiation of mRNA transcription. Indeed, a GDP polyribonucleotidyl transferase (PRNTase) adds the cap structure when the nascent RNA chain length has reached few nucleotides. Ribose 2'-O methylation of viral mRNA cap precedes and facilitates subsequent guanine-N-7 methylation, both activities being carried by the viral polymerase. Polyadenylation of mRNAs occur by a stuttering mechanism at a slipery stop site present at the end viral genes. After finishing transcription of a mRNA, the polymerase can resume transcription of the downstream gene.</text>
</comment>
<comment type="function">
    <text evidence="2">RNA-directed RNA polymerase that catalyzes the replication of viral genomic RNA. The template is composed of the viral RNA tightly encapsidated by the nucleoprotein (N). The replicase mode is dependent on intracellular N protein concentration. In this mode, the polymerase replicates the whole viral genome without recognizing transcriptional signals, and the replicated genome is not caped or polyadenylated.</text>
</comment>
<comment type="catalytic activity">
    <reaction evidence="5">
        <text>RNA(n) + a ribonucleoside 5'-triphosphate = RNA(n+1) + diphosphate</text>
        <dbReference type="Rhea" id="RHEA:21248"/>
        <dbReference type="Rhea" id="RHEA-COMP:14527"/>
        <dbReference type="Rhea" id="RHEA-COMP:17342"/>
        <dbReference type="ChEBI" id="CHEBI:33019"/>
        <dbReference type="ChEBI" id="CHEBI:61557"/>
        <dbReference type="ChEBI" id="CHEBI:140395"/>
        <dbReference type="EC" id="2.7.7.48"/>
    </reaction>
</comment>
<comment type="catalytic activity">
    <reaction evidence="2">
        <text>a 5'-end (5'-triphosphoguanosine)-adenylyl-adenylyl-cytidylyl-adenosine in mRNA + 2 S-adenosyl-L-methionine = a 5'-end (N(7)-methyl 5'-triphosphoguanosine)-(2'-O-methyladenylyl)-adenylyl-cytidylyl-adenosine in mRNA + 2 S-adenosyl-L-homocysteine + H(+)</text>
        <dbReference type="Rhea" id="RHEA:65376"/>
        <dbReference type="Rhea" id="RHEA-COMP:16797"/>
        <dbReference type="Rhea" id="RHEA-COMP:16798"/>
        <dbReference type="ChEBI" id="CHEBI:15378"/>
        <dbReference type="ChEBI" id="CHEBI:57856"/>
        <dbReference type="ChEBI" id="CHEBI:59789"/>
        <dbReference type="ChEBI" id="CHEBI:156483"/>
        <dbReference type="ChEBI" id="CHEBI:156484"/>
        <dbReference type="EC" id="2.1.1.375"/>
    </reaction>
</comment>
<comment type="catalytic activity">
    <reaction evidence="2">
        <text>a 5'-end (5'-triphosphoguanosine)-adenylyl-adenylyl-cytidylyl-adenosine in mRNA + S-adenosyl-L-methionine = a 5'-end (5'-triphosphoguanosine)-(2'-O-methyladenylyl)-adenylyl-cytidylyl-adenosine in mRNA + S-adenosyl-L-homocysteine + H(+)</text>
        <dbReference type="Rhea" id="RHEA:65380"/>
        <dbReference type="Rhea" id="RHEA-COMP:16797"/>
        <dbReference type="Rhea" id="RHEA-COMP:16801"/>
        <dbReference type="ChEBI" id="CHEBI:15378"/>
        <dbReference type="ChEBI" id="CHEBI:57856"/>
        <dbReference type="ChEBI" id="CHEBI:59789"/>
        <dbReference type="ChEBI" id="CHEBI:156482"/>
        <dbReference type="ChEBI" id="CHEBI:156484"/>
    </reaction>
</comment>
<comment type="catalytic activity">
    <reaction evidence="3">
        <text>a 5'-end triphospho-adenylyl-adenylyl-cytidylyl-adenosine in mRNA + GDP + H(+) = a 5'-end (5'-triphosphoguanosine)-adenylyl-adenylyl-cytidylyl-adenosine in mRNA + diphosphate</text>
        <dbReference type="Rhea" id="RHEA:65436"/>
        <dbReference type="Rhea" id="RHEA-COMP:16797"/>
        <dbReference type="Rhea" id="RHEA-COMP:16799"/>
        <dbReference type="ChEBI" id="CHEBI:15378"/>
        <dbReference type="ChEBI" id="CHEBI:33019"/>
        <dbReference type="ChEBI" id="CHEBI:58189"/>
        <dbReference type="ChEBI" id="CHEBI:156484"/>
        <dbReference type="ChEBI" id="CHEBI:156503"/>
        <dbReference type="EC" id="2.7.7.88"/>
    </reaction>
</comment>
<comment type="catalytic activity">
    <reaction evidence="2">
        <text>a 5'-end (5'-triphosphoguanosine)-(2'-O-methyladenylyl)-adenylyl-cytidylyl-adenosine in mRNA + S-adenosyl-L-methionine = a 5'-end (N(7)-methyl 5'-triphosphoguanosine)-(2'-O-methyladenylyl)-adenylyl-cytidylyl-adenosine in mRNA + S-adenosyl-L-homocysteine</text>
        <dbReference type="Rhea" id="RHEA:65440"/>
        <dbReference type="Rhea" id="RHEA-COMP:16798"/>
        <dbReference type="Rhea" id="RHEA-COMP:16801"/>
        <dbReference type="ChEBI" id="CHEBI:57856"/>
        <dbReference type="ChEBI" id="CHEBI:59789"/>
        <dbReference type="ChEBI" id="CHEBI:156482"/>
        <dbReference type="ChEBI" id="CHEBI:156483"/>
    </reaction>
</comment>
<comment type="catalytic activity">
    <reaction evidence="3">
        <text>GTP + H2O = GDP + phosphate + H(+)</text>
        <dbReference type="Rhea" id="RHEA:19669"/>
        <dbReference type="ChEBI" id="CHEBI:15377"/>
        <dbReference type="ChEBI" id="CHEBI:15378"/>
        <dbReference type="ChEBI" id="CHEBI:37565"/>
        <dbReference type="ChEBI" id="CHEBI:43474"/>
        <dbReference type="ChEBI" id="CHEBI:58189"/>
    </reaction>
</comment>
<comment type="subunit">
    <text evidence="8">Interacts with the phophoprotein (via multimerization domain and XD domain); this interaction forms the polymerase L-P complex.</text>
</comment>
<comment type="subcellular location">
    <subcellularLocation>
        <location evidence="7">Virion</location>
    </subcellularLocation>
    <subcellularLocation>
        <location evidence="1">Host cytoplasm</location>
    </subcellularLocation>
</comment>
<comment type="similarity">
    <text evidence="7">Belongs to the paramyxovirus L protein family.</text>
</comment>
<sequence>MDSLSVNQILYPEVHLDSPIVTNKIVAILEYARVPHAYSLEDPTLCQNIKHRLKNGFSNQMIINNVEVGNVIKSKLRSYPAHSHIPYPNCNQDLFNIEDKESTRKIRELLKKGNSLYSKVSDKVFQCLRDTNSRLGLGSELREDIKEKVINLGVYMHSSQWFEPFLFWFTVKTEMRSVIKSQTHTCHRRRHTPVFFTGSSVELLISRDLVAIISKESQHVYYLTFELVLMYCDVIEGRLMTETAMTIDARYTELLGRVRYMWKLIDGFFPALGNPTYQIVAMLEPLSLAYLQLRDITVELRGAFLNHCFTEIHDVLDQNGFSDEGTYHELIEALDYIFITDDIHLTGEIFSFFRSFGHPRLEAVTAAENVRKYMNQPKVIVYETLMKGHAIFCGIIINGYRDRHGGSWPPLTLPLHAADTIRNAQASGEGLTHEQCVDNWKSFAGVKFGCFMPLSLDSDLTMYLKDKALAALQREWDSVYPKEFLRYDPPKGTGSRRLVDVFLNDSSFDPYDVIMYVVSGAYLHDPEFNLSYSLQEKEIKETGRLFAKMTYKMRACQVIAENLISNGIGKYFKDNGMAKDEQDLTKALHTLAVSGVPKDLKESHRGGPVLKTYSRSPVHTSTRNVRAAKGFIGFPQVIRQDQDTDHPENMEAYETVSAFITTDLKKYCLNWRYETISLFAQRLNEIYGLPSFFQWLHKRLETSVLYVSDPHCPPDLDAHIPLYKVPNDQIFIKYPMGGIEGYCQKLWTISTIPYLYLAAYESGVRIASLVQGDNQTIAVTKRVPSTWPYNLKKREAARVTRDYFVILRQRLHDIGHHLKANETIVSSHFFVYSKGIYYDGLLVSQSLKSIARCVFWSETIVDETRAACSNIATTMAKSIERGYDRYLAYSLNFLKVIQQILISLGFTINSTMTRDVVIPLLTNNDLLIRMALLPAPIGGMNYLNMSRLFVRNIGDPVTSSIADLKRMILASLMPEETLHQVMTQQPGDSSFLDWASDPYSANLVCVQSITRLLKNITARFVLIHSPNPMLKGLFHDDSKEEDEGLAAFLMDRHIIVPRAAHEILDHSVTGARESIAGMLDTTKGLIRASMRKGGLTSRVITRLSNYDYEQFRAGMVLLTGRKRNVLIDKESCSVQLARALRSHMWARLARGRPIYGLEVPDVLESMRGHLIRRHETCVICECGSVNYGWFFVPSGCQLDDIDKETSSLRVPYIGSTTDERTDMKLAFVRAPSRSLRSAVRIATVYSWAYGDDDSSWNEAWLLARQRANVSLEELRVITPISTSTNLAHRLRDRSTQVKYSGTSLVRVARYTTISNDNLSFVISDKKVDTNFIYQQGMLLGLGVLETLFRLEKDTGSSNTVLHLHVETDCCVIPMIDHPRIPSSRKLELRAELCTNPLIYDNAPLIDRDATRLYTQSHRRHLVEFVTWSTPQLYHILAKSTALSMIDLVTKFEKDHMNEISALIGDDDINSFITEFLLIEPRLFTIYLGQCAAINWAFDVHYHRPSGKYQMGELLSSFLSRMSKGVFKVLVNALSHPKIYKKFWHCGIIEPIHGPSLDAQNLHTTVCNMVYTCYMTYLDLLLNEELEEFTFLLCESDEDVVPDRFDNIQAKHLCVLADLYCQPGTCPPIQGLRPVEKCAVLTDHIKAEAMLSPAGSSWNINPIIVDHYSCSLTYLRRGSIKQIRLRVDPGFIFDALAEVNVSQPKIGSNNISNMSIKAFRPPHDDVAKLLKDINTSKHNLPISGGNLANYEIHAFRRIGLNSSACYKAVEISTLIRRCLEPGEDGLFLGEGSGSMLITYKEILKLSKCFYNSGVSANSRSGQRELAPYPSEVGLVEHRMGVGNIVKVLFNGRPEVTWVGSVDCFNFIVSNIPTSSVGFIHSDIETLPDKDTIEKLEELAAILSMALLLGKIGSILVIKLMPFSGDFVQGFISYVGSHYREVNLVYPRYSNFISTESYLVMTDLKANRLMNPEKIKQQIIESSVRTSPGLIGHILSIKQLSCIQAIVGDAVSRGDINPTLKKLTPIEQVLINCGLAINGPKLCKELIHHDVASGQDGLLNSILILYRELARFKDNQRSQQGMFHAYPVLVSSRQRELISRITRKFWGHILLYSGNRKLINKFIQNLKSGYLILDLHQNIFVKNLSKSEKQIIMTGGLKREWVFKVTVKETKEWYKLVGYSALIKD</sequence>
<evidence type="ECO:0000250" key="1"/>
<evidence type="ECO:0000250" key="2">
    <source>
        <dbReference type="UniProtKB" id="P03523"/>
    </source>
</evidence>
<evidence type="ECO:0000250" key="3">
    <source>
        <dbReference type="UniProtKB" id="P28887"/>
    </source>
</evidence>
<evidence type="ECO:0000255" key="4"/>
<evidence type="ECO:0000255" key="5">
    <source>
        <dbReference type="PROSITE-ProRule" id="PRU00539"/>
    </source>
</evidence>
<evidence type="ECO:0000255" key="6">
    <source>
        <dbReference type="PROSITE-ProRule" id="PRU00923"/>
    </source>
</evidence>
<evidence type="ECO:0000305" key="7"/>
<evidence type="ECO:0000305" key="8">
    <source>
    </source>
</evidence>
<keyword id="KW-0067">ATP-binding</keyword>
<keyword id="KW-1035">Host cytoplasm</keyword>
<keyword id="KW-0378">Hydrolase</keyword>
<keyword id="KW-0489">Methyltransferase</keyword>
<keyword id="KW-0506">mRNA capping</keyword>
<keyword id="KW-0507">mRNA processing</keyword>
<keyword id="KW-0511">Multifunctional enzyme</keyword>
<keyword id="KW-0547">Nucleotide-binding</keyword>
<keyword id="KW-0548">Nucleotidyltransferase</keyword>
<keyword id="KW-0696">RNA-directed RNA polymerase</keyword>
<keyword id="KW-0949">S-adenosyl-L-methionine</keyword>
<keyword id="KW-0808">Transferase</keyword>
<keyword id="KW-0693">Viral RNA replication</keyword>
<keyword id="KW-0946">Virion</keyword>
<protein>
    <recommendedName>
        <fullName>RNA-directed RNA polymerase L</fullName>
        <shortName>Protein L</shortName>
    </recommendedName>
    <alternativeName>
        <fullName>Large structural protein</fullName>
    </alternativeName>
    <alternativeName>
        <fullName>Replicase</fullName>
    </alternativeName>
    <alternativeName>
        <fullName>Transcriptase</fullName>
    </alternativeName>
    <domain>
        <recommendedName>
            <fullName>RNA-directed RNA polymerase</fullName>
            <ecNumber evidence="3">2.7.7.48</ecNumber>
        </recommendedName>
    </domain>
    <domain>
        <recommendedName>
            <fullName evidence="2">GTP phosphohydrolase</fullName>
            <ecNumber evidence="2">3.6.1.-</ecNumber>
        </recommendedName>
    </domain>
    <domain>
        <recommendedName>
            <fullName evidence="7">GDP polyribonucleotidyltransferase</fullName>
            <ecNumber evidence="2">2.7.7.88</ecNumber>
        </recommendedName>
        <alternativeName>
            <fullName evidence="7">PRNTase</fullName>
        </alternativeName>
    </domain>
    <domain>
        <recommendedName>
            <fullName evidence="7">mRNA cap methyltransferase</fullName>
            <ecNumber evidence="2">2.1.1.375</ecNumber>
        </recommendedName>
        <alternativeName>
            <fullName evidence="2">mRNA (guanine-N(7)-)-methyltransferase</fullName>
            <shortName evidence="2">G-N7-MTase</shortName>
        </alternativeName>
        <alternativeName>
            <fullName evidence="2">mRNA (nucleoside-2'-O-)-methyltransferase</fullName>
            <shortName evidence="2">N1-2'-O-MTase</shortName>
        </alternativeName>
    </domain>
</protein>
<name>L_MEASE</name>
<reference key="1">
    <citation type="journal article" date="1988" name="Virology">
        <title>Measles virus L protein evidences elements of ancestral RNA polymerase.</title>
        <authorList>
            <person name="Blumberg B.M."/>
            <person name="Crowley J.C."/>
            <person name="Silverman J.I."/>
            <person name="Menonna J."/>
            <person name="Cook S.D."/>
            <person name="Dowling P.C."/>
        </authorList>
    </citation>
    <scope>NUCLEOTIDE SEQUENCE [MRNA]</scope>
</reference>
<reference key="2">
    <citation type="journal article" date="1989" name="Virology">
        <title>Mutated and hypermutated genes of persistent measles viruses which caused lethal human brain diseases.</title>
        <authorList>
            <person name="Cattaneo R."/>
            <person name="Schmid A."/>
            <person name="Spielhofer P."/>
            <person name="Kaelin K."/>
            <person name="Baczko K."/>
            <person name="Meulen V."/>
            <person name="Pardowitz J."/>
            <person name="Flanagan S."/>
            <person name="Rima B.K."/>
            <person name="Udem S.A."/>
        </authorList>
    </citation>
    <scope>NUCLEOTIDE SEQUENCE [GENOMIC RNA]</scope>
</reference>
<reference key="3">
    <citation type="journal article" date="2019" name="Sci. Adv.">
        <title>Regulation of measles virus gene expression by P protein coiled-coil properties.</title>
        <authorList>
            <person name="Bloyet L.M."/>
            <person name="Schramm A."/>
            <person name="Lazert C."/>
            <person name="Raynal B."/>
            <person name="Hologne M."/>
            <person name="Walker O."/>
            <person name="Longhi S."/>
            <person name="Gerlier D."/>
        </authorList>
    </citation>
    <scope>INTERACTION WITH THE PHOSPHOPROTEIN</scope>
</reference>
<dbReference type="EC" id="2.7.7.48" evidence="3"/>
<dbReference type="EC" id="3.6.1.-" evidence="2"/>
<dbReference type="EC" id="2.7.7.88" evidence="2"/>
<dbReference type="EC" id="2.1.1.375" evidence="2"/>
<dbReference type="EMBL" id="M20865">
    <property type="protein sequence ID" value="AAA46430.1"/>
    <property type="molecule type" value="mRNA"/>
</dbReference>
<dbReference type="EMBL" id="K01711">
    <property type="protein sequence ID" value="AAA75501.1"/>
    <property type="molecule type" value="Genomic_RNA"/>
</dbReference>
<dbReference type="PIR" id="A28919">
    <property type="entry name" value="ZLNZMV"/>
</dbReference>
<dbReference type="SMR" id="P12576"/>
<dbReference type="Proteomes" id="UP000000833">
    <property type="component" value="Genome"/>
</dbReference>
<dbReference type="GO" id="GO:0030430">
    <property type="term" value="C:host cell cytoplasm"/>
    <property type="evidence" value="ECO:0007669"/>
    <property type="project" value="UniProtKB-SubCell"/>
</dbReference>
<dbReference type="GO" id="GO:0019013">
    <property type="term" value="C:viral nucleocapsid"/>
    <property type="evidence" value="ECO:0000314"/>
    <property type="project" value="CACAO"/>
</dbReference>
<dbReference type="GO" id="GO:0005524">
    <property type="term" value="F:ATP binding"/>
    <property type="evidence" value="ECO:0007669"/>
    <property type="project" value="UniProtKB-KW"/>
</dbReference>
<dbReference type="GO" id="GO:0003924">
    <property type="term" value="F:GTPase activity"/>
    <property type="evidence" value="ECO:0007669"/>
    <property type="project" value="RHEA"/>
</dbReference>
<dbReference type="GO" id="GO:0004482">
    <property type="term" value="F:mRNA 5'-cap (guanine-N7-)-methyltransferase activity"/>
    <property type="evidence" value="ECO:0007669"/>
    <property type="project" value="InterPro"/>
</dbReference>
<dbReference type="GO" id="GO:0003968">
    <property type="term" value="F:RNA-directed RNA polymerase activity"/>
    <property type="evidence" value="ECO:0007669"/>
    <property type="project" value="UniProtKB-KW"/>
</dbReference>
<dbReference type="Gene3D" id="3.40.50.150">
    <property type="entry name" value="Vaccinia Virus protein VP39"/>
    <property type="match status" value="1"/>
</dbReference>
<dbReference type="InterPro" id="IPR039736">
    <property type="entry name" value="L_poly_C"/>
</dbReference>
<dbReference type="InterPro" id="IPR026890">
    <property type="entry name" value="Mononeg_mRNAcap"/>
</dbReference>
<dbReference type="InterPro" id="IPR014023">
    <property type="entry name" value="Mononeg_RNA_pol_cat"/>
</dbReference>
<dbReference type="InterPro" id="IPR025786">
    <property type="entry name" value="Mononega_L_MeTrfase"/>
</dbReference>
<dbReference type="InterPro" id="IPR016269">
    <property type="entry name" value="RNA-dir_pol_paramyxovirus"/>
</dbReference>
<dbReference type="InterPro" id="IPR029063">
    <property type="entry name" value="SAM-dependent_MTases_sf"/>
</dbReference>
<dbReference type="NCBIfam" id="TIGR04198">
    <property type="entry name" value="paramyx_RNAcap"/>
    <property type="match status" value="1"/>
</dbReference>
<dbReference type="Pfam" id="PF14318">
    <property type="entry name" value="Mononeg_mRNAcap"/>
    <property type="match status" value="1"/>
</dbReference>
<dbReference type="Pfam" id="PF00946">
    <property type="entry name" value="Mononeg_RNA_pol"/>
    <property type="match status" value="1"/>
</dbReference>
<dbReference type="PIRSF" id="PIRSF000830">
    <property type="entry name" value="RNA_pol_ParamyxoV"/>
    <property type="match status" value="1"/>
</dbReference>
<dbReference type="PROSITE" id="PS50526">
    <property type="entry name" value="RDRP_SSRNA_NEG_NONSEG"/>
    <property type="match status" value="1"/>
</dbReference>
<dbReference type="PROSITE" id="PS51590">
    <property type="entry name" value="SAM_MT_MNV_L"/>
    <property type="match status" value="1"/>
</dbReference>
<organismHost>
    <name type="scientific">Homo sapiens</name>
    <name type="common">Human</name>
    <dbReference type="NCBI Taxonomy" id="9606"/>
</organismHost>